<name>Y3711_VIBCM</name>
<dbReference type="EMBL" id="CP001234">
    <property type="protein sequence ID" value="ACP07870.1"/>
    <property type="molecule type" value="Genomic_DNA"/>
</dbReference>
<dbReference type="RefSeq" id="WP_000637493.1">
    <property type="nucleotide sequence ID" value="NC_012580.1"/>
</dbReference>
<dbReference type="SMR" id="C3LWL5"/>
<dbReference type="KEGG" id="vcm:VCM66_A0911"/>
<dbReference type="HOGENOM" id="CLU_117144_3_2_6"/>
<dbReference type="Proteomes" id="UP000001217">
    <property type="component" value="Chromosome II"/>
</dbReference>
<dbReference type="Gene3D" id="3.30.110.70">
    <property type="entry name" value="Hypothetical protein apc22750. Chain B"/>
    <property type="match status" value="1"/>
</dbReference>
<dbReference type="HAMAP" id="MF_00338">
    <property type="entry name" value="UPF0145"/>
    <property type="match status" value="1"/>
</dbReference>
<dbReference type="InterPro" id="IPR035439">
    <property type="entry name" value="UPF0145_dom_sf"/>
</dbReference>
<dbReference type="InterPro" id="IPR002765">
    <property type="entry name" value="UPF0145_YbjQ-like"/>
</dbReference>
<dbReference type="NCBIfam" id="NF002776">
    <property type="entry name" value="PRK02877.1"/>
    <property type="match status" value="1"/>
</dbReference>
<dbReference type="PANTHER" id="PTHR34068">
    <property type="entry name" value="UPF0145 PROTEIN YBJQ"/>
    <property type="match status" value="1"/>
</dbReference>
<dbReference type="PANTHER" id="PTHR34068:SF1">
    <property type="entry name" value="UPF0145 PROTEIN YBJQ"/>
    <property type="match status" value="1"/>
</dbReference>
<dbReference type="Pfam" id="PF01906">
    <property type="entry name" value="YbjQ_1"/>
    <property type="match status" value="1"/>
</dbReference>
<dbReference type="SUPFAM" id="SSF117782">
    <property type="entry name" value="YbjQ-like"/>
    <property type="match status" value="1"/>
</dbReference>
<feature type="chain" id="PRO_1000200234" description="UPF0145 protein VCM66_A0911">
    <location>
        <begin position="1"/>
        <end position="106"/>
    </location>
</feature>
<gene>
    <name type="ordered locus">VCM66_A0911</name>
</gene>
<proteinExistence type="inferred from homology"/>
<reference key="1">
    <citation type="journal article" date="2008" name="PLoS ONE">
        <title>A recalibrated molecular clock and independent origins for the cholera pandemic clones.</title>
        <authorList>
            <person name="Feng L."/>
            <person name="Reeves P.R."/>
            <person name="Lan R."/>
            <person name="Ren Y."/>
            <person name="Gao C."/>
            <person name="Zhou Z."/>
            <person name="Ren Y."/>
            <person name="Cheng J."/>
            <person name="Wang W."/>
            <person name="Wang J."/>
            <person name="Qian W."/>
            <person name="Li D."/>
            <person name="Wang L."/>
        </authorList>
    </citation>
    <scope>NUCLEOTIDE SEQUENCE [LARGE SCALE GENOMIC DNA]</scope>
    <source>
        <strain>M66-2</strain>
    </source>
</reference>
<accession>C3LWL5</accession>
<sequence>MIVTTTPNIEGKRIVRYCGVIAGEAILGANIFKDLFAGIRDIVGGRSGTYERELEKARAIALEELQQHAVALGANAVVGIDLDYETFGKANGMLMVSVSGTAVVVE</sequence>
<evidence type="ECO:0000255" key="1">
    <source>
        <dbReference type="HAMAP-Rule" id="MF_00338"/>
    </source>
</evidence>
<comment type="similarity">
    <text evidence="1">Belongs to the UPF0145 family.</text>
</comment>
<protein>
    <recommendedName>
        <fullName evidence="1">UPF0145 protein VCM66_A0911</fullName>
    </recommendedName>
</protein>
<organism>
    <name type="scientific">Vibrio cholerae serotype O1 (strain M66-2)</name>
    <dbReference type="NCBI Taxonomy" id="579112"/>
    <lineage>
        <taxon>Bacteria</taxon>
        <taxon>Pseudomonadati</taxon>
        <taxon>Pseudomonadota</taxon>
        <taxon>Gammaproteobacteria</taxon>
        <taxon>Vibrionales</taxon>
        <taxon>Vibrionaceae</taxon>
        <taxon>Vibrio</taxon>
    </lineage>
</organism>